<protein>
    <recommendedName>
        <fullName evidence="1">Cyclic pyranopterin monophosphate synthase</fullName>
        <ecNumber evidence="1">4.6.1.17</ecNumber>
    </recommendedName>
    <alternativeName>
        <fullName evidence="1">Molybdenum cofactor biosynthesis protein C</fullName>
    </alternativeName>
</protein>
<proteinExistence type="inferred from homology"/>
<evidence type="ECO:0000255" key="1">
    <source>
        <dbReference type="HAMAP-Rule" id="MF_01224"/>
    </source>
</evidence>
<sequence length="165" mass="17579">MSGKLTHIDQTGAANMVDVGSKDETERQAVAEGAVRMKPETLALILEGNAAKGDVIGTARLAGIMAAKRTSDLIPLCHPLMLTKVAVEIEPDENLPGLRVRALARLKGRTGVEMEALTAASVTCLTIYDMAKAVDRHMEIGSIRVIEKSGRKSGDWAVSDPASMR</sequence>
<name>MOAC_BRUSI</name>
<keyword id="KW-0456">Lyase</keyword>
<keyword id="KW-0501">Molybdenum cofactor biosynthesis</keyword>
<feature type="chain" id="PRO_1000085669" description="Cyclic pyranopterin monophosphate synthase">
    <location>
        <begin position="1"/>
        <end position="165"/>
    </location>
</feature>
<feature type="active site" evidence="1">
    <location>
        <position position="129"/>
    </location>
</feature>
<feature type="binding site" evidence="1">
    <location>
        <begin position="76"/>
        <end position="78"/>
    </location>
    <ligand>
        <name>substrate</name>
    </ligand>
</feature>
<feature type="binding site" evidence="1">
    <location>
        <begin position="114"/>
        <end position="115"/>
    </location>
    <ligand>
        <name>substrate</name>
    </ligand>
</feature>
<organism>
    <name type="scientific">Brucella suis (strain ATCC 23445 / NCTC 10510)</name>
    <dbReference type="NCBI Taxonomy" id="470137"/>
    <lineage>
        <taxon>Bacteria</taxon>
        <taxon>Pseudomonadati</taxon>
        <taxon>Pseudomonadota</taxon>
        <taxon>Alphaproteobacteria</taxon>
        <taxon>Hyphomicrobiales</taxon>
        <taxon>Brucellaceae</taxon>
        <taxon>Brucella/Ochrobactrum group</taxon>
        <taxon>Brucella</taxon>
    </lineage>
</organism>
<dbReference type="EC" id="4.6.1.17" evidence="1"/>
<dbReference type="EMBL" id="CP000911">
    <property type="protein sequence ID" value="ABY38241.1"/>
    <property type="molecule type" value="Genomic_DNA"/>
</dbReference>
<dbReference type="RefSeq" id="WP_004690889.1">
    <property type="nucleotide sequence ID" value="NC_010169.1"/>
</dbReference>
<dbReference type="SMR" id="B0CGU0"/>
<dbReference type="GeneID" id="55590825"/>
<dbReference type="KEGG" id="bmt:BSUIS_A1190"/>
<dbReference type="HOGENOM" id="CLU_074693_1_1_5"/>
<dbReference type="UniPathway" id="UPA00344"/>
<dbReference type="Proteomes" id="UP000008545">
    <property type="component" value="Chromosome I"/>
</dbReference>
<dbReference type="GO" id="GO:0061799">
    <property type="term" value="F:cyclic pyranopterin monophosphate synthase activity"/>
    <property type="evidence" value="ECO:0007669"/>
    <property type="project" value="UniProtKB-UniRule"/>
</dbReference>
<dbReference type="GO" id="GO:0006777">
    <property type="term" value="P:Mo-molybdopterin cofactor biosynthetic process"/>
    <property type="evidence" value="ECO:0007669"/>
    <property type="project" value="UniProtKB-UniRule"/>
</dbReference>
<dbReference type="CDD" id="cd01420">
    <property type="entry name" value="MoaC_PE"/>
    <property type="match status" value="1"/>
</dbReference>
<dbReference type="Gene3D" id="3.30.70.640">
    <property type="entry name" value="Molybdopterin cofactor biosynthesis C (MoaC) domain"/>
    <property type="match status" value="1"/>
</dbReference>
<dbReference type="HAMAP" id="MF_01224_B">
    <property type="entry name" value="MoaC_B"/>
    <property type="match status" value="1"/>
</dbReference>
<dbReference type="InterPro" id="IPR023045">
    <property type="entry name" value="MoaC"/>
</dbReference>
<dbReference type="InterPro" id="IPR047594">
    <property type="entry name" value="MoaC_bact/euk"/>
</dbReference>
<dbReference type="InterPro" id="IPR036522">
    <property type="entry name" value="MoaC_sf"/>
</dbReference>
<dbReference type="InterPro" id="IPR050105">
    <property type="entry name" value="MoCo_biosynth_MoaA/MoaC"/>
</dbReference>
<dbReference type="InterPro" id="IPR002820">
    <property type="entry name" value="Mopterin_CF_biosynth-C_dom"/>
</dbReference>
<dbReference type="NCBIfam" id="TIGR00581">
    <property type="entry name" value="moaC"/>
    <property type="match status" value="1"/>
</dbReference>
<dbReference type="NCBIfam" id="NF006870">
    <property type="entry name" value="PRK09364.1"/>
    <property type="match status" value="1"/>
</dbReference>
<dbReference type="PANTHER" id="PTHR22960">
    <property type="entry name" value="MOLYBDOPTERIN COFACTOR SYNTHESIS PROTEIN A"/>
    <property type="match status" value="1"/>
</dbReference>
<dbReference type="Pfam" id="PF01967">
    <property type="entry name" value="MoaC"/>
    <property type="match status" value="1"/>
</dbReference>
<dbReference type="SUPFAM" id="SSF55040">
    <property type="entry name" value="Molybdenum cofactor biosynthesis protein C, MoaC"/>
    <property type="match status" value="1"/>
</dbReference>
<gene>
    <name evidence="1" type="primary">moaC</name>
    <name type="ordered locus">BSUIS_A1190</name>
</gene>
<reference key="1">
    <citation type="submission" date="2007-12" db="EMBL/GenBank/DDBJ databases">
        <title>Brucella suis ATCC 23445 whole genome shotgun sequencing project.</title>
        <authorList>
            <person name="Setubal J.C."/>
            <person name="Bowns C."/>
            <person name="Boyle S."/>
            <person name="Crasta O.R."/>
            <person name="Czar M.J."/>
            <person name="Dharmanolla C."/>
            <person name="Gillespie J.J."/>
            <person name="Kenyon R.W."/>
            <person name="Lu J."/>
            <person name="Mane S."/>
            <person name="Mohapatra S."/>
            <person name="Nagrani S."/>
            <person name="Purkayastha A."/>
            <person name="Rajasimha H.K."/>
            <person name="Shallom J.M."/>
            <person name="Shallom S."/>
            <person name="Shukla M."/>
            <person name="Snyder E.E."/>
            <person name="Sobral B.W."/>
            <person name="Wattam A.R."/>
            <person name="Will R."/>
            <person name="Williams K."/>
            <person name="Yoo H."/>
            <person name="Bruce D."/>
            <person name="Detter C."/>
            <person name="Munk C."/>
            <person name="Brettin T.S."/>
        </authorList>
    </citation>
    <scope>NUCLEOTIDE SEQUENCE [LARGE SCALE GENOMIC DNA]</scope>
    <source>
        <strain>ATCC 23445 / NCTC 10510</strain>
    </source>
</reference>
<comment type="function">
    <text evidence="1">Catalyzes the conversion of (8S)-3',8-cyclo-7,8-dihydroguanosine 5'-triphosphate to cyclic pyranopterin monophosphate (cPMP).</text>
</comment>
<comment type="catalytic activity">
    <reaction evidence="1">
        <text>(8S)-3',8-cyclo-7,8-dihydroguanosine 5'-triphosphate = cyclic pyranopterin phosphate + diphosphate</text>
        <dbReference type="Rhea" id="RHEA:49580"/>
        <dbReference type="ChEBI" id="CHEBI:33019"/>
        <dbReference type="ChEBI" id="CHEBI:59648"/>
        <dbReference type="ChEBI" id="CHEBI:131766"/>
        <dbReference type="EC" id="4.6.1.17"/>
    </reaction>
</comment>
<comment type="pathway">
    <text evidence="1">Cofactor biosynthesis; molybdopterin biosynthesis.</text>
</comment>
<comment type="subunit">
    <text evidence="1">Homohexamer; trimer of dimers.</text>
</comment>
<comment type="similarity">
    <text evidence="1">Belongs to the MoaC family.</text>
</comment>
<accession>B0CGU0</accession>